<gene>
    <name evidence="1" type="primary">psbJ</name>
</gene>
<organism>
    <name type="scientific">Tupiella akineta</name>
    <name type="common">Green alga</name>
    <name type="synonym">Pseudendoclonium akinetum</name>
    <dbReference type="NCBI Taxonomy" id="160070"/>
    <lineage>
        <taxon>Eukaryota</taxon>
        <taxon>Viridiplantae</taxon>
        <taxon>Chlorophyta</taxon>
        <taxon>Ulvophyceae</taxon>
        <taxon>OUU clade</taxon>
        <taxon>Ulotrichales</taxon>
        <taxon>Tupiellaceae</taxon>
        <taxon>Tupiella</taxon>
    </lineage>
</organism>
<name>PSBJ_TUPAK</name>
<sequence>MSNTGTTGRIPLWLVGTVVGIAALTLLSVFFYGSYVGLGSSL</sequence>
<dbReference type="EMBL" id="AY835431">
    <property type="protein sequence ID" value="AAV80670.1"/>
    <property type="molecule type" value="Genomic_DNA"/>
</dbReference>
<dbReference type="RefSeq" id="YP_636248.1">
    <property type="nucleotide sequence ID" value="NC_008114.1"/>
</dbReference>
<dbReference type="SMR" id="Q3ZJ19"/>
<dbReference type="GeneID" id="4108714"/>
<dbReference type="GO" id="GO:0009535">
    <property type="term" value="C:chloroplast thylakoid membrane"/>
    <property type="evidence" value="ECO:0007669"/>
    <property type="project" value="UniProtKB-SubCell"/>
</dbReference>
<dbReference type="GO" id="GO:0009539">
    <property type="term" value="C:photosystem II reaction center"/>
    <property type="evidence" value="ECO:0007669"/>
    <property type="project" value="InterPro"/>
</dbReference>
<dbReference type="GO" id="GO:0015979">
    <property type="term" value="P:photosynthesis"/>
    <property type="evidence" value="ECO:0007669"/>
    <property type="project" value="UniProtKB-UniRule"/>
</dbReference>
<dbReference type="Gene3D" id="6.10.250.2070">
    <property type="match status" value="1"/>
</dbReference>
<dbReference type="HAMAP" id="MF_01305">
    <property type="entry name" value="PSII_PsbJ"/>
    <property type="match status" value="1"/>
</dbReference>
<dbReference type="InterPro" id="IPR002682">
    <property type="entry name" value="PSII_PsbJ"/>
</dbReference>
<dbReference type="InterPro" id="IPR037267">
    <property type="entry name" value="PSII_PsbJ_sf"/>
</dbReference>
<dbReference type="NCBIfam" id="NF002722">
    <property type="entry name" value="PRK02565.1"/>
    <property type="match status" value="1"/>
</dbReference>
<dbReference type="PANTHER" id="PTHR34812">
    <property type="entry name" value="PHOTOSYSTEM II REACTION CENTER PROTEIN J"/>
    <property type="match status" value="1"/>
</dbReference>
<dbReference type="PANTHER" id="PTHR34812:SF3">
    <property type="entry name" value="PHOTOSYSTEM II REACTION CENTER PROTEIN J"/>
    <property type="match status" value="1"/>
</dbReference>
<dbReference type="Pfam" id="PF01788">
    <property type="entry name" value="PsbJ"/>
    <property type="match status" value="1"/>
</dbReference>
<dbReference type="SUPFAM" id="SSF161021">
    <property type="entry name" value="Photosystem II reaction center protein J, PsbJ"/>
    <property type="match status" value="1"/>
</dbReference>
<accession>Q3ZJ19</accession>
<comment type="function">
    <text evidence="1">One of the components of the core complex of photosystem II (PSII). PSII is a light-driven water:plastoquinone oxidoreductase that uses light energy to abstract electrons from H(2)O, generating O(2) and a proton gradient subsequently used for ATP formation. It consists of a core antenna complex that captures photons, and an electron transfer chain that converts photonic excitation into a charge separation.</text>
</comment>
<comment type="subunit">
    <text evidence="1">PSII is composed of 1 copy each of membrane proteins PsbA, PsbB, PsbC, PsbD, PsbE, PsbF, PsbH, PsbI, PsbJ, PsbK, PsbL, PsbM, PsbT, PsbX, PsbY, PsbZ, Psb30/Ycf12, at least 3 peripheral proteins of the oxygen-evolving complex and a large number of cofactors. It forms dimeric complexes.</text>
</comment>
<comment type="subcellular location">
    <subcellularLocation>
        <location evidence="1">Plastid</location>
        <location evidence="1">Chloroplast thylakoid membrane</location>
        <topology evidence="1">Single-pass membrane protein</topology>
    </subcellularLocation>
</comment>
<comment type="similarity">
    <text evidence="1">Belongs to the PsbJ family.</text>
</comment>
<reference key="1">
    <citation type="journal article" date="2005" name="Mol. Biol. Evol.">
        <title>The chloroplast genome sequence of the green alga Pseudendoclonium akinetum (Ulvophyceae) reveals unusual structural features and new insights into the branching order of chlorophyte lineages.</title>
        <authorList>
            <person name="Pombert J.-F."/>
            <person name="Otis C."/>
            <person name="Lemieux C."/>
            <person name="Turmel M."/>
        </authorList>
    </citation>
    <scope>NUCLEOTIDE SEQUENCE [LARGE SCALE GENOMIC DNA]</scope>
    <source>
        <strain>UTEX 1912</strain>
    </source>
</reference>
<keyword id="KW-0150">Chloroplast</keyword>
<keyword id="KW-0472">Membrane</keyword>
<keyword id="KW-0602">Photosynthesis</keyword>
<keyword id="KW-0604">Photosystem II</keyword>
<keyword id="KW-0934">Plastid</keyword>
<keyword id="KW-0674">Reaction center</keyword>
<keyword id="KW-0793">Thylakoid</keyword>
<keyword id="KW-0812">Transmembrane</keyword>
<keyword id="KW-1133">Transmembrane helix</keyword>
<feature type="chain" id="PRO_0000276111" description="Photosystem II reaction center protein J">
    <location>
        <begin position="1"/>
        <end position="42"/>
    </location>
</feature>
<feature type="transmembrane region" description="Helical" evidence="1">
    <location>
        <begin position="10"/>
        <end position="30"/>
    </location>
</feature>
<geneLocation type="chloroplast"/>
<protein>
    <recommendedName>
        <fullName evidence="1">Photosystem II reaction center protein J</fullName>
        <shortName evidence="1">PSII-J</shortName>
    </recommendedName>
</protein>
<proteinExistence type="inferred from homology"/>
<evidence type="ECO:0000255" key="1">
    <source>
        <dbReference type="HAMAP-Rule" id="MF_01305"/>
    </source>
</evidence>